<gene>
    <name evidence="1" type="primary">sstT</name>
    <name type="ordered locus">SSPA2889</name>
</gene>
<comment type="function">
    <text evidence="1">Involved in the import of serine and threonine into the cell, with the concomitant import of sodium (symport system).</text>
</comment>
<comment type="catalytic activity">
    <reaction evidence="1">
        <text>L-serine(in) + Na(+)(in) = L-serine(out) + Na(+)(out)</text>
        <dbReference type="Rhea" id="RHEA:29575"/>
        <dbReference type="ChEBI" id="CHEBI:29101"/>
        <dbReference type="ChEBI" id="CHEBI:33384"/>
    </reaction>
    <physiologicalReaction direction="right-to-left" evidence="1">
        <dbReference type="Rhea" id="RHEA:29577"/>
    </physiologicalReaction>
</comment>
<comment type="catalytic activity">
    <reaction evidence="1">
        <text>L-threonine(in) + Na(+)(in) = L-threonine(out) + Na(+)(out)</text>
        <dbReference type="Rhea" id="RHEA:69999"/>
        <dbReference type="ChEBI" id="CHEBI:29101"/>
        <dbReference type="ChEBI" id="CHEBI:57926"/>
    </reaction>
    <physiologicalReaction direction="right-to-left" evidence="1">
        <dbReference type="Rhea" id="RHEA:70001"/>
    </physiologicalReaction>
</comment>
<comment type="subcellular location">
    <subcellularLocation>
        <location evidence="1">Cell inner membrane</location>
        <topology evidence="1">Multi-pass membrane protein</topology>
    </subcellularLocation>
</comment>
<comment type="similarity">
    <text evidence="1">Belongs to the dicarboxylate/amino acid:cation symporter (DAACS) (TC 2.A.23) family.</text>
</comment>
<accession>B5BGE1</accession>
<protein>
    <recommendedName>
        <fullName evidence="1">Serine/threonine transporter SstT</fullName>
    </recommendedName>
    <alternativeName>
        <fullName evidence="1">Na(+)/serine-threonine symporter</fullName>
    </alternativeName>
</protein>
<dbReference type="EMBL" id="FM200053">
    <property type="protein sequence ID" value="CAR61136.1"/>
    <property type="molecule type" value="Genomic_DNA"/>
</dbReference>
<dbReference type="RefSeq" id="WP_000235363.1">
    <property type="nucleotide sequence ID" value="NC_011147.1"/>
</dbReference>
<dbReference type="SMR" id="B5BGE1"/>
<dbReference type="KEGG" id="sek:SSPA2889"/>
<dbReference type="HOGENOM" id="CLU_044581_0_0_6"/>
<dbReference type="Proteomes" id="UP000001869">
    <property type="component" value="Chromosome"/>
</dbReference>
<dbReference type="GO" id="GO:0005886">
    <property type="term" value="C:plasma membrane"/>
    <property type="evidence" value="ECO:0007669"/>
    <property type="project" value="UniProtKB-SubCell"/>
</dbReference>
<dbReference type="GO" id="GO:0005295">
    <property type="term" value="F:neutral L-amino acid:sodium symporter activity"/>
    <property type="evidence" value="ECO:0007669"/>
    <property type="project" value="TreeGrafter"/>
</dbReference>
<dbReference type="GO" id="GO:0032329">
    <property type="term" value="P:serine transport"/>
    <property type="evidence" value="ECO:0007669"/>
    <property type="project" value="InterPro"/>
</dbReference>
<dbReference type="GO" id="GO:0015826">
    <property type="term" value="P:threonine transport"/>
    <property type="evidence" value="ECO:0007669"/>
    <property type="project" value="InterPro"/>
</dbReference>
<dbReference type="FunFam" id="1.10.3860.10:FF:000003">
    <property type="entry name" value="Serine/threonine transporter sstT"/>
    <property type="match status" value="1"/>
</dbReference>
<dbReference type="Gene3D" id="1.10.3860.10">
    <property type="entry name" value="Sodium:dicarboxylate symporter"/>
    <property type="match status" value="1"/>
</dbReference>
<dbReference type="HAMAP" id="MF_01582">
    <property type="entry name" value="Ser_Thr_transp_SstT"/>
    <property type="match status" value="1"/>
</dbReference>
<dbReference type="InterPro" id="IPR001991">
    <property type="entry name" value="Na-dicarboxylate_symporter"/>
</dbReference>
<dbReference type="InterPro" id="IPR036458">
    <property type="entry name" value="Na:dicarbo_symporter_sf"/>
</dbReference>
<dbReference type="InterPro" id="IPR023025">
    <property type="entry name" value="Ser_Thr_transp_SstT"/>
</dbReference>
<dbReference type="NCBIfam" id="NF010151">
    <property type="entry name" value="PRK13628.1"/>
    <property type="match status" value="1"/>
</dbReference>
<dbReference type="PANTHER" id="PTHR42865">
    <property type="entry name" value="PROTON/GLUTAMATE-ASPARTATE SYMPORTER"/>
    <property type="match status" value="1"/>
</dbReference>
<dbReference type="PANTHER" id="PTHR42865:SF8">
    <property type="entry name" value="SERINE_THREONINE TRANSPORTER SSTT"/>
    <property type="match status" value="1"/>
</dbReference>
<dbReference type="Pfam" id="PF00375">
    <property type="entry name" value="SDF"/>
    <property type="match status" value="1"/>
</dbReference>
<dbReference type="PRINTS" id="PR00173">
    <property type="entry name" value="EDTRNSPORT"/>
</dbReference>
<dbReference type="SUPFAM" id="SSF118215">
    <property type="entry name" value="Proton glutamate symport protein"/>
    <property type="match status" value="1"/>
</dbReference>
<dbReference type="PROSITE" id="PS00713">
    <property type="entry name" value="NA_DICARBOXYL_SYMP_1"/>
    <property type="match status" value="1"/>
</dbReference>
<sequence length="414" mass="43413">MATQRASGLLQRLAQGSLVKQILVGLVLGILLAWISKPAAEAVGLLGTLFVGALKAVAPVLVLMLVMASIANHQHGQKTNIRPILFLYLLGTFSAALAAVVFSFAFPSTLHLSSSAQDIVPPSGIVEVLRGLLMSMVSNPIDALLNANYIGILVWAVGLGFALRHGNETTKNLVNDMSNAVTFMVKLVIRFAPVGIFGLVSSTLATTGFSTLWGYAHLLVVLIGCMLLVALVVNPLLVFWKIRRNPYPLVFACLRESGVYAFFTRSSAANIPVNMALCEKLNLDRDTYSVSIPLGATINMAGAAITITVLTLAAVHTLGVPVDLPTALLLSVVASLCACGASGVAGGSLLLIPLACNMFGIPNDIAMQVVAVGFIIGVLQDSCETALNSSTDVLFTAAACQAEDERLANNALRS</sequence>
<keyword id="KW-0029">Amino-acid transport</keyword>
<keyword id="KW-0997">Cell inner membrane</keyword>
<keyword id="KW-1003">Cell membrane</keyword>
<keyword id="KW-0472">Membrane</keyword>
<keyword id="KW-0769">Symport</keyword>
<keyword id="KW-0812">Transmembrane</keyword>
<keyword id="KW-1133">Transmembrane helix</keyword>
<keyword id="KW-0813">Transport</keyword>
<organism>
    <name type="scientific">Salmonella paratyphi A (strain AKU_12601)</name>
    <dbReference type="NCBI Taxonomy" id="554290"/>
    <lineage>
        <taxon>Bacteria</taxon>
        <taxon>Pseudomonadati</taxon>
        <taxon>Pseudomonadota</taxon>
        <taxon>Gammaproteobacteria</taxon>
        <taxon>Enterobacterales</taxon>
        <taxon>Enterobacteriaceae</taxon>
        <taxon>Salmonella</taxon>
    </lineage>
</organism>
<feature type="chain" id="PRO_1000197563" description="Serine/threonine transporter SstT">
    <location>
        <begin position="1"/>
        <end position="414"/>
    </location>
</feature>
<feature type="transmembrane region" description="Helical" evidence="1">
    <location>
        <begin position="16"/>
        <end position="36"/>
    </location>
</feature>
<feature type="transmembrane region" description="Helical" evidence="1">
    <location>
        <begin position="46"/>
        <end position="66"/>
    </location>
</feature>
<feature type="transmembrane region" description="Helical" evidence="1">
    <location>
        <begin position="84"/>
        <end position="104"/>
    </location>
</feature>
<feature type="transmembrane region" description="Helical" evidence="1">
    <location>
        <begin position="143"/>
        <end position="163"/>
    </location>
</feature>
<feature type="transmembrane region" description="Helical" evidence="1">
    <location>
        <begin position="180"/>
        <end position="200"/>
    </location>
</feature>
<feature type="transmembrane region" description="Helical" evidence="1">
    <location>
        <begin position="219"/>
        <end position="239"/>
    </location>
</feature>
<feature type="transmembrane region" description="Helical" evidence="1">
    <location>
        <begin position="300"/>
        <end position="320"/>
    </location>
</feature>
<feature type="transmembrane region" description="Helical" evidence="1">
    <location>
        <begin position="332"/>
        <end position="352"/>
    </location>
</feature>
<proteinExistence type="inferred from homology"/>
<reference key="1">
    <citation type="journal article" date="2009" name="BMC Genomics">
        <title>Pseudogene accumulation in the evolutionary histories of Salmonella enterica serovars Paratyphi A and Typhi.</title>
        <authorList>
            <person name="Holt K.E."/>
            <person name="Thomson N.R."/>
            <person name="Wain J."/>
            <person name="Langridge G.C."/>
            <person name="Hasan R."/>
            <person name="Bhutta Z.A."/>
            <person name="Quail M.A."/>
            <person name="Norbertczak H."/>
            <person name="Walker D."/>
            <person name="Simmonds M."/>
            <person name="White B."/>
            <person name="Bason N."/>
            <person name="Mungall K."/>
            <person name="Dougan G."/>
            <person name="Parkhill J."/>
        </authorList>
    </citation>
    <scope>NUCLEOTIDE SEQUENCE [LARGE SCALE GENOMIC DNA]</scope>
    <source>
        <strain>AKU_12601</strain>
    </source>
</reference>
<evidence type="ECO:0000255" key="1">
    <source>
        <dbReference type="HAMAP-Rule" id="MF_01582"/>
    </source>
</evidence>
<name>SSTT_SALPK</name>